<gene>
    <name evidence="1" type="primary">rpmA</name>
    <name type="ordered locus">Kole_0339</name>
</gene>
<accession>C5CDI0</accession>
<organism>
    <name type="scientific">Kosmotoga olearia (strain ATCC BAA-1733 / DSM 21960 / TBF 19.5.1)</name>
    <dbReference type="NCBI Taxonomy" id="521045"/>
    <lineage>
        <taxon>Bacteria</taxon>
        <taxon>Thermotogati</taxon>
        <taxon>Thermotogota</taxon>
        <taxon>Thermotogae</taxon>
        <taxon>Kosmotogales</taxon>
        <taxon>Kosmotogaceae</taxon>
        <taxon>Kosmotoga</taxon>
    </lineage>
</organism>
<feature type="chain" id="PRO_1000211933" description="Large ribosomal subunit protein bL27">
    <location>
        <begin position="1"/>
        <end position="83"/>
    </location>
</feature>
<feature type="region of interest" description="Disordered" evidence="2">
    <location>
        <begin position="1"/>
        <end position="21"/>
    </location>
</feature>
<reference key="1">
    <citation type="submission" date="2009-06" db="EMBL/GenBank/DDBJ databases">
        <title>Complete sequence of Thermotogales bacterium TBF 19.5.1.</title>
        <authorList>
            <consortium name="US DOE Joint Genome Institute"/>
            <person name="Lucas S."/>
            <person name="Copeland A."/>
            <person name="Lapidus A."/>
            <person name="Glavina del Rio T."/>
            <person name="Tice H."/>
            <person name="Bruce D."/>
            <person name="Goodwin L."/>
            <person name="Pitluck S."/>
            <person name="Chertkov O."/>
            <person name="Brettin T."/>
            <person name="Detter J.C."/>
            <person name="Han C."/>
            <person name="Schmutz J."/>
            <person name="Larimer F."/>
            <person name="Land M."/>
            <person name="Hauser L."/>
            <person name="Kyrpides N."/>
            <person name="Ovchinnikova G."/>
            <person name="Noll K."/>
        </authorList>
    </citation>
    <scope>NUCLEOTIDE SEQUENCE [LARGE SCALE GENOMIC DNA]</scope>
    <source>
        <strain>ATCC BAA-1733 / DSM 21960 / TBF 19.5.1</strain>
    </source>
</reference>
<name>RL27_KOSOT</name>
<dbReference type="EMBL" id="CP001634">
    <property type="protein sequence ID" value="ACR79064.1"/>
    <property type="molecule type" value="Genomic_DNA"/>
</dbReference>
<dbReference type="RefSeq" id="WP_012744851.1">
    <property type="nucleotide sequence ID" value="NC_012785.1"/>
</dbReference>
<dbReference type="SMR" id="C5CDI0"/>
<dbReference type="STRING" id="521045.Kole_0339"/>
<dbReference type="KEGG" id="kol:Kole_0339"/>
<dbReference type="eggNOG" id="COG0211">
    <property type="taxonomic scope" value="Bacteria"/>
</dbReference>
<dbReference type="HOGENOM" id="CLU_095424_4_1_0"/>
<dbReference type="OrthoDB" id="9803474at2"/>
<dbReference type="Proteomes" id="UP000002382">
    <property type="component" value="Chromosome"/>
</dbReference>
<dbReference type="GO" id="GO:0022625">
    <property type="term" value="C:cytosolic large ribosomal subunit"/>
    <property type="evidence" value="ECO:0007669"/>
    <property type="project" value="TreeGrafter"/>
</dbReference>
<dbReference type="GO" id="GO:0003735">
    <property type="term" value="F:structural constituent of ribosome"/>
    <property type="evidence" value="ECO:0007669"/>
    <property type="project" value="InterPro"/>
</dbReference>
<dbReference type="GO" id="GO:0006412">
    <property type="term" value="P:translation"/>
    <property type="evidence" value="ECO:0007669"/>
    <property type="project" value="UniProtKB-UniRule"/>
</dbReference>
<dbReference type="FunFam" id="2.40.50.100:FF:000020">
    <property type="entry name" value="50S ribosomal protein L27"/>
    <property type="match status" value="1"/>
</dbReference>
<dbReference type="Gene3D" id="2.40.50.100">
    <property type="match status" value="1"/>
</dbReference>
<dbReference type="HAMAP" id="MF_00539">
    <property type="entry name" value="Ribosomal_bL27"/>
    <property type="match status" value="1"/>
</dbReference>
<dbReference type="InterPro" id="IPR001684">
    <property type="entry name" value="Ribosomal_bL27"/>
</dbReference>
<dbReference type="InterPro" id="IPR018261">
    <property type="entry name" value="Ribosomal_bL27_CS"/>
</dbReference>
<dbReference type="NCBIfam" id="TIGR00062">
    <property type="entry name" value="L27"/>
    <property type="match status" value="1"/>
</dbReference>
<dbReference type="PANTHER" id="PTHR15893:SF0">
    <property type="entry name" value="LARGE RIBOSOMAL SUBUNIT PROTEIN BL27M"/>
    <property type="match status" value="1"/>
</dbReference>
<dbReference type="PANTHER" id="PTHR15893">
    <property type="entry name" value="RIBOSOMAL PROTEIN L27"/>
    <property type="match status" value="1"/>
</dbReference>
<dbReference type="Pfam" id="PF01016">
    <property type="entry name" value="Ribosomal_L27"/>
    <property type="match status" value="1"/>
</dbReference>
<dbReference type="PRINTS" id="PR00063">
    <property type="entry name" value="RIBOSOMALL27"/>
</dbReference>
<dbReference type="SUPFAM" id="SSF110324">
    <property type="entry name" value="Ribosomal L27 protein-like"/>
    <property type="match status" value="1"/>
</dbReference>
<dbReference type="PROSITE" id="PS00831">
    <property type="entry name" value="RIBOSOMAL_L27"/>
    <property type="match status" value="1"/>
</dbReference>
<comment type="similarity">
    <text evidence="1">Belongs to the bacterial ribosomal protein bL27 family.</text>
</comment>
<evidence type="ECO:0000255" key="1">
    <source>
        <dbReference type="HAMAP-Rule" id="MF_00539"/>
    </source>
</evidence>
<evidence type="ECO:0000256" key="2">
    <source>
        <dbReference type="SAM" id="MobiDB-lite"/>
    </source>
</evidence>
<evidence type="ECO:0000305" key="3"/>
<sequence>MAHKRSSGAGRNGRDSNPKYLGVKRGENAFVRAGTIIIRQRGTKIHPGQNVGMGRDFTLYALIDGKVHFETRNNRKYVSVYAE</sequence>
<protein>
    <recommendedName>
        <fullName evidence="1">Large ribosomal subunit protein bL27</fullName>
    </recommendedName>
    <alternativeName>
        <fullName evidence="3">50S ribosomal protein L27</fullName>
    </alternativeName>
</protein>
<keyword id="KW-1185">Reference proteome</keyword>
<keyword id="KW-0687">Ribonucleoprotein</keyword>
<keyword id="KW-0689">Ribosomal protein</keyword>
<proteinExistence type="inferred from homology"/>